<feature type="chain" id="PRO_0000068337" description="Replication initiation protein">
    <location>
        <begin position="1"/>
        <end position="340"/>
    </location>
</feature>
<feature type="region of interest" description="Disordered" evidence="1">
    <location>
        <begin position="38"/>
        <end position="58"/>
    </location>
</feature>
<accession>P13961</accession>
<dbReference type="EMBL" id="M16167">
    <property type="protein sequence ID" value="AAB17112.1"/>
    <property type="molecule type" value="Genomic_DNA"/>
</dbReference>
<dbReference type="PIR" id="B26870">
    <property type="entry name" value="B26870"/>
</dbReference>
<dbReference type="PIR" id="S15225">
    <property type="entry name" value="S15225"/>
</dbReference>
<dbReference type="GO" id="GO:0006260">
    <property type="term" value="P:DNA replication"/>
    <property type="evidence" value="ECO:0007669"/>
    <property type="project" value="UniProtKB-KW"/>
</dbReference>
<dbReference type="GO" id="GO:0006276">
    <property type="term" value="P:plasmid maintenance"/>
    <property type="evidence" value="ECO:0007669"/>
    <property type="project" value="InterPro"/>
</dbReference>
<dbReference type="InterPro" id="IPR003446">
    <property type="entry name" value="Plasmid_replication_init_RepA"/>
</dbReference>
<dbReference type="NCBIfam" id="NF040977">
    <property type="entry name" value="RepA_IncFII_LM"/>
    <property type="match status" value="1"/>
</dbReference>
<dbReference type="Pfam" id="PF02387">
    <property type="entry name" value="IncFII_repA"/>
    <property type="match status" value="1"/>
</dbReference>
<geneLocation type="plasmid">
    <name>IncFI P307</name>
</geneLocation>
<evidence type="ECO:0000256" key="1">
    <source>
        <dbReference type="SAM" id="MobiDB-lite"/>
    </source>
</evidence>
<proteinExistence type="predicted"/>
<sequence>MAERYISQRHWSQLPPEEQIRVWEDYEAGRATTFLVEPERKRTKRRRGEHSTKPKCENPTWYRPARYKALSGQLGHAYNRLVKKDPVTGEQSLRMHMSRHPFYVQKRTFAGRKYAFRPEKQRLLDAVWPVLVSFSDAGTHTVGMSVSRLAKEISPKDSKGKVIPELEVTVSRLSRLLAEQVRFGVLGMSEETMWDRETRQRLPRYVWITPAGWQMLGVDMVKLHEQQQKRLRESEIRQQLIREGVLREDEDISVHAARKRWYLQRSQDALKHRRAKAAARKRANLLKKLPADQQIYEMSQHILKRMPPDEAYWCTPERLQQLAIRELYQLELTLAAPPPH</sequence>
<organism>
    <name type="scientific">Escherichia coli</name>
    <dbReference type="NCBI Taxonomy" id="562"/>
    <lineage>
        <taxon>Bacteria</taxon>
        <taxon>Pseudomonadati</taxon>
        <taxon>Pseudomonadota</taxon>
        <taxon>Gammaproteobacteria</taxon>
        <taxon>Enterobacterales</taxon>
        <taxon>Enterobacteriaceae</taxon>
        <taxon>Escherichia</taxon>
    </lineage>
</organism>
<name>REP4_ECOLX</name>
<keyword id="KW-0235">DNA replication</keyword>
<keyword id="KW-0614">Plasmid</keyword>
<protein>
    <recommendedName>
        <fullName>Replication initiation protein</fullName>
    </recommendedName>
    <alternativeName>
        <fullName>Replication-associated protein</fullName>
    </alternativeName>
</protein>
<gene>
    <name type="primary">repA1</name>
</gene>
<reference key="1">
    <citation type="journal article" date="1987" name="J. Bacteriol.">
        <title>Nucleotide sequence analysis of RepFIC, a basic replicon present in IncFI plasmids P307 and F, and its relation to the RepA replicon of IncFII plasmids.</title>
        <authorList>
            <person name="Saadi S."/>
            <person name="Maas W.K."/>
            <person name="Hill D.F."/>
            <person name="Bergquist P.L."/>
        </authorList>
    </citation>
    <scope>NUCLEOTIDE SEQUENCE [GENOMIC DNA]</scope>
</reference>
<reference key="2">
    <citation type="journal article" date="1991" name="Mol. Microbiol.">
        <title>Isolation and properties of the RepA1 protein of the IncFII replicon, RepFIC.</title>
        <authorList>
            <person name="Maas R."/>
            <person name="Oppenheim J."/>
            <person name="Saadi S."/>
            <person name="Fuchs T."/>
            <person name="Maas W.K."/>
        </authorList>
    </citation>
    <scope>NUCLEOTIDE SEQUENCE [GENOMIC DNA]</scope>
    <scope>SEQUENCE REVISION</scope>
</reference>
<reference key="3">
    <citation type="submission" date="1996-09" db="EMBL/GenBank/DDBJ databases">
        <authorList>
            <person name="Maas R."/>
        </authorList>
    </citation>
    <scope>NUCLEOTIDE SEQUENCE [GENOMIC DNA]</scope>
    <scope>SEQUENCE REVISION</scope>
</reference>